<feature type="chain" id="PRO_0000153880" description="Non-specific lipid-transfer protein 1">
    <location>
        <begin position="1"/>
        <end position="91"/>
    </location>
</feature>
<feature type="disulfide bond" evidence="1 3">
    <location>
        <begin position="3"/>
        <end position="50"/>
    </location>
</feature>
<feature type="disulfide bond" evidence="1 3">
    <location>
        <begin position="13"/>
        <end position="27"/>
    </location>
</feature>
<feature type="disulfide bond" evidence="1 3">
    <location>
        <begin position="28"/>
        <end position="73"/>
    </location>
</feature>
<feature type="disulfide bond" evidence="1 3">
    <location>
        <begin position="48"/>
        <end position="87"/>
    </location>
</feature>
<feature type="helix" evidence="4">
    <location>
        <begin position="3"/>
        <end position="10"/>
    </location>
</feature>
<feature type="helix" evidence="4">
    <location>
        <begin position="11"/>
        <end position="13"/>
    </location>
</feature>
<feature type="helix" evidence="4">
    <location>
        <begin position="14"/>
        <end position="19"/>
    </location>
</feature>
<feature type="helix" evidence="4">
    <location>
        <begin position="25"/>
        <end position="37"/>
    </location>
</feature>
<feature type="helix" evidence="4">
    <location>
        <begin position="41"/>
        <end position="57"/>
    </location>
</feature>
<feature type="helix" evidence="4">
    <location>
        <begin position="63"/>
        <end position="72"/>
    </location>
</feature>
<feature type="helix" evidence="4">
    <location>
        <begin position="87"/>
        <end position="89"/>
    </location>
</feature>
<comment type="function">
    <text>Plant non-specific lipid-transfer proteins transfer phospholipids as well as galactolipids across membranes. May play a role in wax or cutin deposition in the cell walls of expanding epidermal cells and certain secretory tissues.</text>
</comment>
<comment type="allergen">
    <text>Causes an allergic reaction in human. Binds to IgE.</text>
</comment>
<comment type="similarity">
    <text evidence="2">Belongs to the plant LTP family.</text>
</comment>
<evidence type="ECO:0000269" key="1">
    <source>
    </source>
</evidence>
<evidence type="ECO:0000305" key="2"/>
<evidence type="ECO:0007744" key="3">
    <source>
        <dbReference type="PDB" id="2ALG"/>
    </source>
</evidence>
<evidence type="ECO:0007829" key="4">
    <source>
        <dbReference type="PDB" id="2ALG"/>
    </source>
</evidence>
<name>NLTP1_PRUPE</name>
<organism>
    <name type="scientific">Prunus persica</name>
    <name type="common">Peach</name>
    <name type="synonym">Amygdalus persica</name>
    <dbReference type="NCBI Taxonomy" id="3760"/>
    <lineage>
        <taxon>Eukaryota</taxon>
        <taxon>Viridiplantae</taxon>
        <taxon>Streptophyta</taxon>
        <taxon>Embryophyta</taxon>
        <taxon>Tracheophyta</taxon>
        <taxon>Spermatophyta</taxon>
        <taxon>Magnoliopsida</taxon>
        <taxon>eudicotyledons</taxon>
        <taxon>Gunneridae</taxon>
        <taxon>Pentapetalae</taxon>
        <taxon>rosids</taxon>
        <taxon>fabids</taxon>
        <taxon>Rosales</taxon>
        <taxon>Rosaceae</taxon>
        <taxon>Amygdaloideae</taxon>
        <taxon>Amygdaleae</taxon>
        <taxon>Prunus</taxon>
    </lineage>
</organism>
<accession>P81402</accession>
<proteinExistence type="evidence at protein level"/>
<keyword id="KW-0002">3D-structure</keyword>
<keyword id="KW-0020">Allergen</keyword>
<keyword id="KW-0903">Direct protein sequencing</keyword>
<keyword id="KW-1015">Disulfide bond</keyword>
<keyword id="KW-0446">Lipid-binding</keyword>
<keyword id="KW-0813">Transport</keyword>
<reference key="1">
    <citation type="journal article" date="1999" name="Biol. Chem.">
        <title>Complete amino acid sequence determination of the major allergen of peach (Prunus persica) Pru p 1.</title>
        <authorList>
            <person name="Pastorello E.A."/>
            <person name="Ortolani C."/>
            <person name="Baroglio C."/>
            <person name="Pravettoni V."/>
            <person name="Ispano M."/>
            <person name="Giuffrida M.G."/>
            <person name="Fortunato D."/>
            <person name="Farioli L."/>
            <person name="Monza M."/>
            <person name="Napolitano L."/>
            <person name="Sacco M."/>
            <person name="Scibola E."/>
            <person name="Conti A."/>
        </authorList>
    </citation>
    <scope>PROTEIN SEQUENCE</scope>
</reference>
<reference key="2">
    <citation type="journal article" date="1999" name="J. Allergy Clin. Immunol.">
        <title>The major allergen of peach (Prunus persica) is a lipid transfer protein.</title>
        <authorList>
            <person name="Pastorello E.A."/>
            <person name="Farioli L."/>
            <person name="Pravettoni V."/>
            <person name="Ortolani C."/>
            <person name="Ispano M."/>
            <person name="Monza M."/>
            <person name="Baroglio C."/>
            <person name="Scibola E."/>
            <person name="Ansaloni R."/>
            <person name="Incorvaia C."/>
            <person name="Conti A."/>
        </authorList>
    </citation>
    <scope>PROTEIN SEQUENCE OF 1-32; 53-66 AND 73-80</scope>
</reference>
<reference key="3">
    <citation type="journal article" date="2006" name="J. Mol. Biol.">
        <title>Crystal structure of peach Pru p 3, the prototypic member of the family of plant non-specific lipid transfer protein pan-allergens.</title>
        <authorList>
            <person name="Pasquato N."/>
            <person name="Berni R."/>
            <person name="Folli C."/>
            <person name="Folloni S."/>
            <person name="Cianci M."/>
            <person name="Pantano S."/>
            <person name="Helliwell J.R."/>
            <person name="Zanotti G."/>
        </authorList>
    </citation>
    <scope>X-RAY CRYSTALLOGRAPHY (2.3 ANGSTROMS)</scope>
    <scope>DISULFIDE BONDS</scope>
</reference>
<protein>
    <recommendedName>
        <fullName>Non-specific lipid-transfer protein 1</fullName>
        <shortName>LTP 1</shortName>
    </recommendedName>
    <alternativeName>
        <fullName>Allergen Pru p 1</fullName>
    </alternativeName>
    <alternativeName>
        <fullName>Major allergen Pru p 3</fullName>
    </alternativeName>
    <allergenName>Pru p 3</allergenName>
</protein>
<dbReference type="PDB" id="2ALG">
    <property type="method" value="X-ray"/>
    <property type="resolution" value="2.30 A"/>
    <property type="chains" value="A/B=1-91"/>
</dbReference>
<dbReference type="PDB" id="2B5S">
    <property type="method" value="X-ray"/>
    <property type="resolution" value="2.35 A"/>
    <property type="chains" value="A/B=1-91"/>
</dbReference>
<dbReference type="PDBsum" id="2ALG"/>
<dbReference type="PDBsum" id="2B5S"/>
<dbReference type="BMRB" id="P81402"/>
<dbReference type="SMR" id="P81402"/>
<dbReference type="Allergome" id="3454">
    <property type="allergen name" value="Pru p 3.0101"/>
</dbReference>
<dbReference type="Allergome" id="603">
    <property type="allergen name" value="Pru p 3"/>
</dbReference>
<dbReference type="eggNOG" id="ENOG502S4CI">
    <property type="taxonomic scope" value="Eukaryota"/>
</dbReference>
<dbReference type="EvolutionaryTrace" id="P81402"/>
<dbReference type="GO" id="GO:0008289">
    <property type="term" value="F:lipid binding"/>
    <property type="evidence" value="ECO:0007669"/>
    <property type="project" value="UniProtKB-KW"/>
</dbReference>
<dbReference type="GO" id="GO:0006869">
    <property type="term" value="P:lipid transport"/>
    <property type="evidence" value="ECO:0007669"/>
    <property type="project" value="InterPro"/>
</dbReference>
<dbReference type="CDD" id="cd01960">
    <property type="entry name" value="nsLTP1"/>
    <property type="match status" value="1"/>
</dbReference>
<dbReference type="FunFam" id="1.10.110.10:FF:000002">
    <property type="entry name" value="Non-specific lipid-transfer protein"/>
    <property type="match status" value="1"/>
</dbReference>
<dbReference type="Gene3D" id="1.10.110.10">
    <property type="entry name" value="Plant lipid-transfer and hydrophobic proteins"/>
    <property type="match status" value="1"/>
</dbReference>
<dbReference type="InterPro" id="IPR036312">
    <property type="entry name" value="Bifun_inhib/LTP/seed_sf"/>
</dbReference>
<dbReference type="InterPro" id="IPR016140">
    <property type="entry name" value="Bifunc_inhib/LTP/seed_store"/>
</dbReference>
<dbReference type="InterPro" id="IPR000528">
    <property type="entry name" value="Plant_nsLTP"/>
</dbReference>
<dbReference type="PANTHER" id="PTHR33076">
    <property type="entry name" value="NON-SPECIFIC LIPID-TRANSFER PROTEIN 2-RELATED"/>
    <property type="match status" value="1"/>
</dbReference>
<dbReference type="Pfam" id="PF00234">
    <property type="entry name" value="Tryp_alpha_amyl"/>
    <property type="match status" value="1"/>
</dbReference>
<dbReference type="PRINTS" id="PR00382">
    <property type="entry name" value="LIPIDTRNSFER"/>
</dbReference>
<dbReference type="SMART" id="SM00499">
    <property type="entry name" value="AAI"/>
    <property type="match status" value="1"/>
</dbReference>
<dbReference type="SUPFAM" id="SSF47699">
    <property type="entry name" value="Bifunctional inhibitor/lipid-transfer protein/seed storage 2S albumin"/>
    <property type="match status" value="1"/>
</dbReference>
<dbReference type="PROSITE" id="PS00597">
    <property type="entry name" value="PLANT_LTP"/>
    <property type="match status" value="1"/>
</dbReference>
<sequence>ITCGQVSSALAPCIPYVRGGGAVPPACCNGIRNVNNLARTTPDRQAACNCLKQLSASVPGVNPNNAAALPGKCGVHIPYKISASTNCATVK</sequence>